<comment type="function">
    <text evidence="1">Part of the ABC transporter complex GsiABCD involved in glutathione import. Probably responsible for the translocation of the substrate across the membrane.</text>
</comment>
<comment type="subunit">
    <text evidence="1">The complex is composed of two ATP-binding proteins (GsiA), two transmembrane proteins (GsiC and GsiD) and a solute-binding protein (GsiB).</text>
</comment>
<comment type="subcellular location">
    <subcellularLocation>
        <location evidence="1">Cell inner membrane</location>
        <topology evidence="2">Multi-pass membrane protein</topology>
    </subcellularLocation>
</comment>
<comment type="similarity">
    <text evidence="4">Belongs to the binding-protein-dependent transport system permease family.</text>
</comment>
<name>GSID_SHIBS</name>
<protein>
    <recommendedName>
        <fullName evidence="1">Glutathione transport system permease protein GsiD</fullName>
    </recommendedName>
</protein>
<dbReference type="EMBL" id="CP000036">
    <property type="protein sequence ID" value="ABB65396.1"/>
    <property type="molecule type" value="Genomic_DNA"/>
</dbReference>
<dbReference type="RefSeq" id="WP_001236044.1">
    <property type="nucleotide sequence ID" value="NC_007613.1"/>
</dbReference>
<dbReference type="SMR" id="Q323W2"/>
<dbReference type="GeneID" id="93776592"/>
<dbReference type="KEGG" id="sbo:SBO_0722"/>
<dbReference type="HOGENOM" id="CLU_028518_1_1_6"/>
<dbReference type="Proteomes" id="UP000007067">
    <property type="component" value="Chromosome"/>
</dbReference>
<dbReference type="GO" id="GO:0005886">
    <property type="term" value="C:plasma membrane"/>
    <property type="evidence" value="ECO:0007669"/>
    <property type="project" value="UniProtKB-SubCell"/>
</dbReference>
<dbReference type="GO" id="GO:0071916">
    <property type="term" value="F:dipeptide transmembrane transporter activity"/>
    <property type="evidence" value="ECO:0007669"/>
    <property type="project" value="TreeGrafter"/>
</dbReference>
<dbReference type="CDD" id="cd06261">
    <property type="entry name" value="TM_PBP2"/>
    <property type="match status" value="1"/>
</dbReference>
<dbReference type="FunFam" id="1.10.3720.10:FF:000022">
    <property type="entry name" value="Glutathione ABC transporter permease GsiD"/>
    <property type="match status" value="1"/>
</dbReference>
<dbReference type="Gene3D" id="1.10.3720.10">
    <property type="entry name" value="MetI-like"/>
    <property type="match status" value="1"/>
</dbReference>
<dbReference type="InterPro" id="IPR050366">
    <property type="entry name" value="BP-dependent_transpt_permease"/>
</dbReference>
<dbReference type="InterPro" id="IPR000515">
    <property type="entry name" value="MetI-like"/>
</dbReference>
<dbReference type="InterPro" id="IPR035906">
    <property type="entry name" value="MetI-like_sf"/>
</dbReference>
<dbReference type="InterPro" id="IPR025966">
    <property type="entry name" value="OppC_N"/>
</dbReference>
<dbReference type="NCBIfam" id="NF011662">
    <property type="entry name" value="PRK15082.1"/>
    <property type="match status" value="1"/>
</dbReference>
<dbReference type="PANTHER" id="PTHR43386:SF3">
    <property type="entry name" value="GLUTATHIONE TRANSPORT SYSTEM PERMEASE PROTEIN GSID"/>
    <property type="match status" value="1"/>
</dbReference>
<dbReference type="PANTHER" id="PTHR43386">
    <property type="entry name" value="OLIGOPEPTIDE TRANSPORT SYSTEM PERMEASE PROTEIN APPC"/>
    <property type="match status" value="1"/>
</dbReference>
<dbReference type="Pfam" id="PF00528">
    <property type="entry name" value="BPD_transp_1"/>
    <property type="match status" value="1"/>
</dbReference>
<dbReference type="Pfam" id="PF12911">
    <property type="entry name" value="OppC_N"/>
    <property type="match status" value="1"/>
</dbReference>
<dbReference type="SUPFAM" id="SSF161098">
    <property type="entry name" value="MetI-like"/>
    <property type="match status" value="1"/>
</dbReference>
<dbReference type="PROSITE" id="PS50928">
    <property type="entry name" value="ABC_TM1"/>
    <property type="match status" value="1"/>
</dbReference>
<proteinExistence type="inferred from homology"/>
<organism>
    <name type="scientific">Shigella boydii serotype 4 (strain Sb227)</name>
    <dbReference type="NCBI Taxonomy" id="300268"/>
    <lineage>
        <taxon>Bacteria</taxon>
        <taxon>Pseudomonadati</taxon>
        <taxon>Pseudomonadota</taxon>
        <taxon>Gammaproteobacteria</taxon>
        <taxon>Enterobacterales</taxon>
        <taxon>Enterobacteriaceae</taxon>
        <taxon>Shigella</taxon>
    </lineage>
</organism>
<evidence type="ECO:0000250" key="1">
    <source>
        <dbReference type="UniProtKB" id="P75799"/>
    </source>
</evidence>
<evidence type="ECO:0000255" key="2"/>
<evidence type="ECO:0000255" key="3">
    <source>
        <dbReference type="PROSITE-ProRule" id="PRU00441"/>
    </source>
</evidence>
<evidence type="ECO:0000305" key="4"/>
<feature type="chain" id="PRO_0000280012" description="Glutathione transport system permease protein GsiD">
    <location>
        <begin position="1"/>
        <end position="303"/>
    </location>
</feature>
<feature type="transmembrane region" description="Helical" evidence="3">
    <location>
        <begin position="40"/>
        <end position="60"/>
    </location>
</feature>
<feature type="transmembrane region" description="Helical" evidence="3">
    <location>
        <begin position="105"/>
        <end position="125"/>
    </location>
</feature>
<feature type="transmembrane region" description="Helical" evidence="3">
    <location>
        <begin position="144"/>
        <end position="164"/>
    </location>
</feature>
<feature type="transmembrane region" description="Helical" evidence="3">
    <location>
        <begin position="165"/>
        <end position="185"/>
    </location>
</feature>
<feature type="transmembrane region" description="Helical" evidence="3">
    <location>
        <begin position="222"/>
        <end position="242"/>
    </location>
</feature>
<feature type="transmembrane region" description="Helical" evidence="3">
    <location>
        <begin position="266"/>
        <end position="286"/>
    </location>
</feature>
<feature type="domain" description="ABC transmembrane type-1" evidence="3">
    <location>
        <begin position="101"/>
        <end position="290"/>
    </location>
</feature>
<keyword id="KW-0997">Cell inner membrane</keyword>
<keyword id="KW-1003">Cell membrane</keyword>
<keyword id="KW-0472">Membrane</keyword>
<keyword id="KW-0812">Transmembrane</keyword>
<keyword id="KW-1133">Transmembrane helix</keyword>
<keyword id="KW-0813">Transport</keyword>
<sequence length="303" mass="33252">MRLFNWRRQAVLNAMPLVKPDQVRTPWHEFWRRFRRQHMAMTAALFVILLIVVAIFARWIAPYDAENYFDYDNLNNGPSLQHWFGVDSLGRDIFSRVLVGAQISLAAGVFAVFIGAAIGTLLGLLAGYYEGWWDRLIMRICDVLFAFPGILLAIAVVAVLGSGIANVIIAVAIFSIPAFARLVRGNTLVLKQQTFIESARSIGASDMTILLRHILPGTVSSIVVFFTMRIGTSIISAASLSFLGLGAQPPTPEWGAMLNEARADMVIAPHVAVFPALAIFLTVLAFNLLGDGLRDALDPKIKG</sequence>
<accession>Q323W2</accession>
<reference key="1">
    <citation type="journal article" date="2005" name="Nucleic Acids Res.">
        <title>Genome dynamics and diversity of Shigella species, the etiologic agents of bacillary dysentery.</title>
        <authorList>
            <person name="Yang F."/>
            <person name="Yang J."/>
            <person name="Zhang X."/>
            <person name="Chen L."/>
            <person name="Jiang Y."/>
            <person name="Yan Y."/>
            <person name="Tang X."/>
            <person name="Wang J."/>
            <person name="Xiong Z."/>
            <person name="Dong J."/>
            <person name="Xue Y."/>
            <person name="Zhu Y."/>
            <person name="Xu X."/>
            <person name="Sun L."/>
            <person name="Chen S."/>
            <person name="Nie H."/>
            <person name="Peng J."/>
            <person name="Xu J."/>
            <person name="Wang Y."/>
            <person name="Yuan Z."/>
            <person name="Wen Y."/>
            <person name="Yao Z."/>
            <person name="Shen Y."/>
            <person name="Qiang B."/>
            <person name="Hou Y."/>
            <person name="Yu J."/>
            <person name="Jin Q."/>
        </authorList>
    </citation>
    <scope>NUCLEOTIDE SEQUENCE [LARGE SCALE GENOMIC DNA]</scope>
    <source>
        <strain>Sb227</strain>
    </source>
</reference>
<gene>
    <name evidence="1" type="primary">gsiD</name>
    <name type="ordered locus">SBO_0722</name>
</gene>